<gene>
    <name evidence="1" type="primary">gatA</name>
    <name type="ordered locus">ERGA_CDS_03730</name>
</gene>
<sequence>MKDILKLSIAEMHENLIKKEFSAVELTQAHIDAINNEQLNAFITKTPEVALNAARKADHILTHEQDKITSLTGIPVGIKDLFCTKNIKTTACSNILRNFTPQYDSTVVKRLIDDGAVMLGKLNMDEFAMGSSNSNSCFGPVENPWTRADGVKVVPGGSSGGSSAAVAGFLCAGALGSDTGGSVRQPAAFCGIVGLKPTYGRCSRSGMIAFASSLDQAGVLTRTVKDAALMLQPICGYDTQDSTSANITTPRFLDSITNIIKGKRIGIPKEYELSNKYKEYEEVSEMWLKGIKYLENEGAEIVNISLPHTSYALPVYYIICSAEASSNLARYDGIKYGTRVNSDNINEMYELTRGNNLGTEVKRRILIGAYALSSGYYDAYYNKAQCIRRLVTNDFVESFKSVDYILTPTAPKEAFAMDEQLDTLTMYLNDVFTVPASLAGLPAISIPIGLSKNKLPLSLQIIGNYYDEGGILNIASVIEKYTGNILK</sequence>
<evidence type="ECO:0000255" key="1">
    <source>
        <dbReference type="HAMAP-Rule" id="MF_00120"/>
    </source>
</evidence>
<evidence type="ECO:0000305" key="2"/>
<proteinExistence type="inferred from homology"/>
<name>GATA_EHRRG</name>
<dbReference type="EC" id="6.3.5.7" evidence="1"/>
<dbReference type="EMBL" id="CR925677">
    <property type="protein sequence ID" value="CAI27825.1"/>
    <property type="status" value="ALT_INIT"/>
    <property type="molecule type" value="Genomic_DNA"/>
</dbReference>
<dbReference type="RefSeq" id="WP_044156973.1">
    <property type="nucleotide sequence ID" value="NC_006831.1"/>
</dbReference>
<dbReference type="SMR" id="Q5FHN7"/>
<dbReference type="KEGG" id="erg:ERGA_CDS_03730"/>
<dbReference type="HOGENOM" id="CLU_009600_0_3_5"/>
<dbReference type="OrthoDB" id="9811471at2"/>
<dbReference type="Proteomes" id="UP000000533">
    <property type="component" value="Chromosome"/>
</dbReference>
<dbReference type="GO" id="GO:0030956">
    <property type="term" value="C:glutamyl-tRNA(Gln) amidotransferase complex"/>
    <property type="evidence" value="ECO:0007669"/>
    <property type="project" value="InterPro"/>
</dbReference>
<dbReference type="GO" id="GO:0005524">
    <property type="term" value="F:ATP binding"/>
    <property type="evidence" value="ECO:0007669"/>
    <property type="project" value="UniProtKB-KW"/>
</dbReference>
<dbReference type="GO" id="GO:0050567">
    <property type="term" value="F:glutaminyl-tRNA synthase (glutamine-hydrolyzing) activity"/>
    <property type="evidence" value="ECO:0007669"/>
    <property type="project" value="UniProtKB-UniRule"/>
</dbReference>
<dbReference type="GO" id="GO:0006412">
    <property type="term" value="P:translation"/>
    <property type="evidence" value="ECO:0007669"/>
    <property type="project" value="UniProtKB-UniRule"/>
</dbReference>
<dbReference type="Gene3D" id="3.90.1300.10">
    <property type="entry name" value="Amidase signature (AS) domain"/>
    <property type="match status" value="1"/>
</dbReference>
<dbReference type="HAMAP" id="MF_00120">
    <property type="entry name" value="GatA"/>
    <property type="match status" value="1"/>
</dbReference>
<dbReference type="InterPro" id="IPR000120">
    <property type="entry name" value="Amidase"/>
</dbReference>
<dbReference type="InterPro" id="IPR020556">
    <property type="entry name" value="Amidase_CS"/>
</dbReference>
<dbReference type="InterPro" id="IPR023631">
    <property type="entry name" value="Amidase_dom"/>
</dbReference>
<dbReference type="InterPro" id="IPR036928">
    <property type="entry name" value="AS_sf"/>
</dbReference>
<dbReference type="InterPro" id="IPR004412">
    <property type="entry name" value="GatA"/>
</dbReference>
<dbReference type="NCBIfam" id="TIGR00132">
    <property type="entry name" value="gatA"/>
    <property type="match status" value="1"/>
</dbReference>
<dbReference type="PANTHER" id="PTHR11895:SF151">
    <property type="entry name" value="GLUTAMYL-TRNA(GLN) AMIDOTRANSFERASE SUBUNIT A"/>
    <property type="match status" value="1"/>
</dbReference>
<dbReference type="PANTHER" id="PTHR11895">
    <property type="entry name" value="TRANSAMIDASE"/>
    <property type="match status" value="1"/>
</dbReference>
<dbReference type="Pfam" id="PF01425">
    <property type="entry name" value="Amidase"/>
    <property type="match status" value="1"/>
</dbReference>
<dbReference type="SUPFAM" id="SSF75304">
    <property type="entry name" value="Amidase signature (AS) enzymes"/>
    <property type="match status" value="1"/>
</dbReference>
<dbReference type="PROSITE" id="PS00571">
    <property type="entry name" value="AMIDASES"/>
    <property type="match status" value="1"/>
</dbReference>
<reference key="1">
    <citation type="journal article" date="2006" name="J. Bacteriol.">
        <title>Comparative genomic analysis of three strains of Ehrlichia ruminantium reveals an active process of genome size plasticity.</title>
        <authorList>
            <person name="Frutos R."/>
            <person name="Viari A."/>
            <person name="Ferraz C."/>
            <person name="Morgat A."/>
            <person name="Eychenie S."/>
            <person name="Kandassamy Y."/>
            <person name="Chantal I."/>
            <person name="Bensaid A."/>
            <person name="Coissac E."/>
            <person name="Vachiery N."/>
            <person name="Demaille J."/>
            <person name="Martinez D."/>
        </authorList>
    </citation>
    <scope>NUCLEOTIDE SEQUENCE [LARGE SCALE GENOMIC DNA]</scope>
    <source>
        <strain>Gardel</strain>
    </source>
</reference>
<comment type="function">
    <text evidence="1">Allows the formation of correctly charged Gln-tRNA(Gln) through the transamidation of misacylated Glu-tRNA(Gln) in organisms which lack glutaminyl-tRNA synthetase. The reaction takes place in the presence of glutamine and ATP through an activated gamma-phospho-Glu-tRNA(Gln).</text>
</comment>
<comment type="catalytic activity">
    <reaction evidence="1">
        <text>L-glutamyl-tRNA(Gln) + L-glutamine + ATP + H2O = L-glutaminyl-tRNA(Gln) + L-glutamate + ADP + phosphate + H(+)</text>
        <dbReference type="Rhea" id="RHEA:17521"/>
        <dbReference type="Rhea" id="RHEA-COMP:9681"/>
        <dbReference type="Rhea" id="RHEA-COMP:9684"/>
        <dbReference type="ChEBI" id="CHEBI:15377"/>
        <dbReference type="ChEBI" id="CHEBI:15378"/>
        <dbReference type="ChEBI" id="CHEBI:29985"/>
        <dbReference type="ChEBI" id="CHEBI:30616"/>
        <dbReference type="ChEBI" id="CHEBI:43474"/>
        <dbReference type="ChEBI" id="CHEBI:58359"/>
        <dbReference type="ChEBI" id="CHEBI:78520"/>
        <dbReference type="ChEBI" id="CHEBI:78521"/>
        <dbReference type="ChEBI" id="CHEBI:456216"/>
        <dbReference type="EC" id="6.3.5.7"/>
    </reaction>
</comment>
<comment type="subunit">
    <text evidence="1">Heterotrimer of A, B and C subunits.</text>
</comment>
<comment type="similarity">
    <text evidence="1">Belongs to the amidase family. GatA subfamily.</text>
</comment>
<comment type="sequence caution" evidence="2">
    <conflict type="erroneous initiation">
        <sequence resource="EMBL-CDS" id="CAI27825"/>
    </conflict>
</comment>
<accession>Q5FHN7</accession>
<organism>
    <name type="scientific">Ehrlichia ruminantium (strain Gardel)</name>
    <dbReference type="NCBI Taxonomy" id="302409"/>
    <lineage>
        <taxon>Bacteria</taxon>
        <taxon>Pseudomonadati</taxon>
        <taxon>Pseudomonadota</taxon>
        <taxon>Alphaproteobacteria</taxon>
        <taxon>Rickettsiales</taxon>
        <taxon>Anaplasmataceae</taxon>
        <taxon>Ehrlichia</taxon>
    </lineage>
</organism>
<protein>
    <recommendedName>
        <fullName evidence="1">Glutamyl-tRNA(Gln) amidotransferase subunit A</fullName>
        <shortName evidence="1">Glu-ADT subunit A</shortName>
        <ecNumber evidence="1">6.3.5.7</ecNumber>
    </recommendedName>
</protein>
<keyword id="KW-0067">ATP-binding</keyword>
<keyword id="KW-0436">Ligase</keyword>
<keyword id="KW-0547">Nucleotide-binding</keyword>
<keyword id="KW-0648">Protein biosynthesis</keyword>
<feature type="chain" id="PRO_0000241100" description="Glutamyl-tRNA(Gln) amidotransferase subunit A">
    <location>
        <begin position="1"/>
        <end position="487"/>
    </location>
</feature>
<feature type="active site" description="Charge relay system" evidence="1">
    <location>
        <position position="79"/>
    </location>
</feature>
<feature type="active site" description="Charge relay system" evidence="1">
    <location>
        <position position="158"/>
    </location>
</feature>
<feature type="active site" description="Acyl-ester intermediate" evidence="1">
    <location>
        <position position="182"/>
    </location>
</feature>